<dbReference type="EMBL" id="CP001043">
    <property type="protein sequence ID" value="ACC69936.1"/>
    <property type="molecule type" value="Genomic_DNA"/>
</dbReference>
<dbReference type="RefSeq" id="WP_012400156.1">
    <property type="nucleotide sequence ID" value="NC_010622.1"/>
</dbReference>
<dbReference type="SMR" id="B2JF07"/>
<dbReference type="STRING" id="391038.Bphy_0747"/>
<dbReference type="KEGG" id="bph:Bphy_0747"/>
<dbReference type="eggNOG" id="COG0776">
    <property type="taxonomic scope" value="Bacteria"/>
</dbReference>
<dbReference type="HOGENOM" id="CLU_105066_2_0_4"/>
<dbReference type="OrthoDB" id="9804203at2"/>
<dbReference type="Proteomes" id="UP000001192">
    <property type="component" value="Chromosome 1"/>
</dbReference>
<dbReference type="GO" id="GO:0005694">
    <property type="term" value="C:chromosome"/>
    <property type="evidence" value="ECO:0007669"/>
    <property type="project" value="InterPro"/>
</dbReference>
<dbReference type="GO" id="GO:0005829">
    <property type="term" value="C:cytosol"/>
    <property type="evidence" value="ECO:0007669"/>
    <property type="project" value="TreeGrafter"/>
</dbReference>
<dbReference type="GO" id="GO:0003677">
    <property type="term" value="F:DNA binding"/>
    <property type="evidence" value="ECO:0007669"/>
    <property type="project" value="UniProtKB-UniRule"/>
</dbReference>
<dbReference type="GO" id="GO:0030527">
    <property type="term" value="F:structural constituent of chromatin"/>
    <property type="evidence" value="ECO:0007669"/>
    <property type="project" value="InterPro"/>
</dbReference>
<dbReference type="GO" id="GO:0006310">
    <property type="term" value="P:DNA recombination"/>
    <property type="evidence" value="ECO:0007669"/>
    <property type="project" value="UniProtKB-UniRule"/>
</dbReference>
<dbReference type="GO" id="GO:0006355">
    <property type="term" value="P:regulation of DNA-templated transcription"/>
    <property type="evidence" value="ECO:0007669"/>
    <property type="project" value="UniProtKB-UniRule"/>
</dbReference>
<dbReference type="GO" id="GO:0006417">
    <property type="term" value="P:regulation of translation"/>
    <property type="evidence" value="ECO:0007669"/>
    <property type="project" value="UniProtKB-UniRule"/>
</dbReference>
<dbReference type="CDD" id="cd13836">
    <property type="entry name" value="IHF_B"/>
    <property type="match status" value="1"/>
</dbReference>
<dbReference type="Gene3D" id="4.10.520.10">
    <property type="entry name" value="IHF-like DNA-binding proteins"/>
    <property type="match status" value="1"/>
</dbReference>
<dbReference type="HAMAP" id="MF_00381">
    <property type="entry name" value="IHF_beta"/>
    <property type="match status" value="1"/>
</dbReference>
<dbReference type="InterPro" id="IPR000119">
    <property type="entry name" value="Hist_DNA-bd"/>
</dbReference>
<dbReference type="InterPro" id="IPR010992">
    <property type="entry name" value="IHF-like_DNA-bd_dom_sf"/>
</dbReference>
<dbReference type="InterPro" id="IPR005685">
    <property type="entry name" value="IHF_beta"/>
</dbReference>
<dbReference type="NCBIfam" id="TIGR00988">
    <property type="entry name" value="hip"/>
    <property type="match status" value="1"/>
</dbReference>
<dbReference type="NCBIfam" id="NF001222">
    <property type="entry name" value="PRK00199.1"/>
    <property type="match status" value="1"/>
</dbReference>
<dbReference type="PANTHER" id="PTHR33175">
    <property type="entry name" value="DNA-BINDING PROTEIN HU"/>
    <property type="match status" value="1"/>
</dbReference>
<dbReference type="PANTHER" id="PTHR33175:SF5">
    <property type="entry name" value="INTEGRATION HOST FACTOR SUBUNIT BETA"/>
    <property type="match status" value="1"/>
</dbReference>
<dbReference type="Pfam" id="PF00216">
    <property type="entry name" value="Bac_DNA_binding"/>
    <property type="match status" value="1"/>
</dbReference>
<dbReference type="PRINTS" id="PR01727">
    <property type="entry name" value="DNABINDINGHU"/>
</dbReference>
<dbReference type="SMART" id="SM00411">
    <property type="entry name" value="BHL"/>
    <property type="match status" value="1"/>
</dbReference>
<dbReference type="SUPFAM" id="SSF47729">
    <property type="entry name" value="IHF-like DNA-binding proteins"/>
    <property type="match status" value="1"/>
</dbReference>
<reference key="1">
    <citation type="journal article" date="2014" name="Stand. Genomic Sci.">
        <title>Complete genome sequence of Burkholderia phymatum STM815(T), a broad host range and efficient nitrogen-fixing symbiont of Mimosa species.</title>
        <authorList>
            <person name="Moulin L."/>
            <person name="Klonowska A."/>
            <person name="Caroline B."/>
            <person name="Booth K."/>
            <person name="Vriezen J.A."/>
            <person name="Melkonian R."/>
            <person name="James E.K."/>
            <person name="Young J.P."/>
            <person name="Bena G."/>
            <person name="Hauser L."/>
            <person name="Land M."/>
            <person name="Kyrpides N."/>
            <person name="Bruce D."/>
            <person name="Chain P."/>
            <person name="Copeland A."/>
            <person name="Pitluck S."/>
            <person name="Woyke T."/>
            <person name="Lizotte-Waniewski M."/>
            <person name="Bristow J."/>
            <person name="Riley M."/>
        </authorList>
    </citation>
    <scope>NUCLEOTIDE SEQUENCE [LARGE SCALE GENOMIC DNA]</scope>
    <source>
        <strain>DSM 17167 / CIP 108236 / LMG 21445 / STM815</strain>
    </source>
</reference>
<evidence type="ECO:0000255" key="1">
    <source>
        <dbReference type="HAMAP-Rule" id="MF_00381"/>
    </source>
</evidence>
<evidence type="ECO:0000256" key="2">
    <source>
        <dbReference type="SAM" id="MobiDB-lite"/>
    </source>
</evidence>
<organism>
    <name type="scientific">Paraburkholderia phymatum (strain DSM 17167 / CIP 108236 / LMG 21445 / STM815)</name>
    <name type="common">Burkholderia phymatum</name>
    <dbReference type="NCBI Taxonomy" id="391038"/>
    <lineage>
        <taxon>Bacteria</taxon>
        <taxon>Pseudomonadati</taxon>
        <taxon>Pseudomonadota</taxon>
        <taxon>Betaproteobacteria</taxon>
        <taxon>Burkholderiales</taxon>
        <taxon>Burkholderiaceae</taxon>
        <taxon>Paraburkholderia</taxon>
    </lineage>
</organism>
<sequence>MTKSELVAQLATRFPQLVLKDADFAVKTMLDAMSDALANGHRIEIRGFGSFGLNRRPSRVGRNPKSGEKVLVPEKHVPHFKPGKELRERVDRNAGEPLKADAADDDL</sequence>
<name>IHFB_PARP8</name>
<gene>
    <name evidence="1" type="primary">ihfB</name>
    <name evidence="1" type="synonym">himD</name>
    <name type="ordered locus">Bphy_0747</name>
</gene>
<comment type="function">
    <text evidence="1">This protein is one of the two subunits of integration host factor, a specific DNA-binding protein that functions in genetic recombination as well as in transcriptional and translational control.</text>
</comment>
<comment type="subunit">
    <text evidence="1">Heterodimer of an alpha and a beta chain.</text>
</comment>
<comment type="similarity">
    <text evidence="1">Belongs to the bacterial histone-like protein family.</text>
</comment>
<proteinExistence type="inferred from homology"/>
<feature type="chain" id="PRO_1000122201" description="Integration host factor subunit beta">
    <location>
        <begin position="1"/>
        <end position="107"/>
    </location>
</feature>
<feature type="region of interest" description="Disordered" evidence="2">
    <location>
        <begin position="56"/>
        <end position="107"/>
    </location>
</feature>
<feature type="compositionally biased region" description="Basic and acidic residues" evidence="2">
    <location>
        <begin position="65"/>
        <end position="107"/>
    </location>
</feature>
<accession>B2JF07</accession>
<keyword id="KW-0233">DNA recombination</keyword>
<keyword id="KW-0238">DNA-binding</keyword>
<keyword id="KW-1185">Reference proteome</keyword>
<keyword id="KW-0804">Transcription</keyword>
<keyword id="KW-0805">Transcription regulation</keyword>
<keyword id="KW-0810">Translation regulation</keyword>
<protein>
    <recommendedName>
        <fullName evidence="1">Integration host factor subunit beta</fullName>
        <shortName evidence="1">IHF-beta</shortName>
    </recommendedName>
</protein>